<dbReference type="GO" id="GO:0005576">
    <property type="term" value="C:extracellular region"/>
    <property type="evidence" value="ECO:0007669"/>
    <property type="project" value="UniProtKB-SubCell"/>
</dbReference>
<dbReference type="GO" id="GO:0005184">
    <property type="term" value="F:neuropeptide hormone activity"/>
    <property type="evidence" value="ECO:0007669"/>
    <property type="project" value="InterPro"/>
</dbReference>
<dbReference type="GO" id="GO:0007218">
    <property type="term" value="P:neuropeptide signaling pathway"/>
    <property type="evidence" value="ECO:0007669"/>
    <property type="project" value="UniProtKB-KW"/>
</dbReference>
<dbReference type="InterPro" id="IPR001484">
    <property type="entry name" value="Pyrokinin_CS"/>
</dbReference>
<dbReference type="PROSITE" id="PS00539">
    <property type="entry name" value="PYROKININ"/>
    <property type="match status" value="1"/>
</dbReference>
<feature type="peptide" id="PRO_0000421606" description="CAPA-Pyrokinin" evidence="3">
    <location>
        <begin position="1"/>
        <end position="16"/>
    </location>
</feature>
<feature type="modified residue" description="Leucine amide" evidence="3">
    <location>
        <position position="16"/>
    </location>
</feature>
<accession>B3A079</accession>
<proteinExistence type="evidence at protein level"/>
<reference evidence="5" key="1">
    <citation type="journal article" date="2012" name="Syst. Biol.">
        <title>Peptidomics-based phylogeny and biogeography of Mantophasmatodea (Hexapoda).</title>
        <authorList>
            <person name="Predel R."/>
            <person name="Neupert S."/>
            <person name="Huetteroth W."/>
            <person name="Kahnt J."/>
            <person name="Waidelich D."/>
            <person name="Roth S."/>
        </authorList>
    </citation>
    <scope>PROTEIN SEQUENCE</scope>
    <scope>AMIDATION AT LEU-16</scope>
    <source>
        <tissue evidence="3">Abdominal perisympathetic organs</tissue>
    </source>
</reference>
<evidence type="ECO:0000250" key="1">
    <source>
        <dbReference type="UniProtKB" id="P82617"/>
    </source>
</evidence>
<evidence type="ECO:0000255" key="2"/>
<evidence type="ECO:0000269" key="3">
    <source>
    </source>
</evidence>
<evidence type="ECO:0000303" key="4">
    <source>
    </source>
</evidence>
<evidence type="ECO:0000305" key="5"/>
<evidence type="ECO:0000305" key="6">
    <source>
    </source>
</evidence>
<sequence>SSGGGDGSGMWFGPRL</sequence>
<organism>
    <name type="scientific">Lobatophasma redelinghuysense</name>
    <name type="common">Gladiator</name>
    <name type="synonym">Heel-walker</name>
    <dbReference type="NCBI Taxonomy" id="253128"/>
    <lineage>
        <taxon>Eukaryota</taxon>
        <taxon>Metazoa</taxon>
        <taxon>Ecdysozoa</taxon>
        <taxon>Arthropoda</taxon>
        <taxon>Hexapoda</taxon>
        <taxon>Insecta</taxon>
        <taxon>Pterygota</taxon>
        <taxon>Neoptera</taxon>
        <taxon>Polyneoptera</taxon>
        <taxon>Mantophasmatodea</taxon>
        <taxon>Austrophasmatidae</taxon>
        <taxon>Lobatophasma</taxon>
    </lineage>
</organism>
<keyword id="KW-0027">Amidation</keyword>
<keyword id="KW-0903">Direct protein sequencing</keyword>
<keyword id="KW-0527">Neuropeptide</keyword>
<keyword id="KW-0964">Secreted</keyword>
<comment type="function">
    <text evidence="1">Myoactive.</text>
</comment>
<comment type="subcellular location">
    <subcellularLocation>
        <location evidence="6">Secreted</location>
    </subcellularLocation>
</comment>
<comment type="similarity">
    <text evidence="2">Belongs to the pyrokinin family.</text>
</comment>
<protein>
    <recommendedName>
        <fullName evidence="4">CAPA-Pyrokinin</fullName>
        <shortName evidence="4">CAPA-PK</shortName>
    </recommendedName>
    <alternativeName>
        <fullName evidence="1">FXPRL-amide</fullName>
    </alternativeName>
</protein>
<name>PPK4_LOBRE</name>